<organism>
    <name type="scientific">Paracidovorax citrulli (strain AAC00-1)</name>
    <name type="common">Acidovorax citrulli</name>
    <dbReference type="NCBI Taxonomy" id="397945"/>
    <lineage>
        <taxon>Bacteria</taxon>
        <taxon>Pseudomonadati</taxon>
        <taxon>Pseudomonadota</taxon>
        <taxon>Betaproteobacteria</taxon>
        <taxon>Burkholderiales</taxon>
        <taxon>Comamonadaceae</taxon>
        <taxon>Paracidovorax</taxon>
    </lineage>
</organism>
<comment type="function">
    <text evidence="1">Required for insertion of 4Fe-4S clusters.</text>
</comment>
<comment type="cofactor">
    <cofactor evidence="1">
        <name>iron-sulfur cluster</name>
        <dbReference type="ChEBI" id="CHEBI:30408"/>
    </cofactor>
    <text evidence="1">Binds 1 iron-sulfur cluster per subunit.</text>
</comment>
<comment type="subunit">
    <text evidence="1">Homodimer.</text>
</comment>
<comment type="similarity">
    <text evidence="1">Belongs to the HesB/IscA family.</text>
</comment>
<keyword id="KW-0408">Iron</keyword>
<keyword id="KW-0411">Iron-sulfur</keyword>
<keyword id="KW-0479">Metal-binding</keyword>
<name>ERPA_PARC0</name>
<accession>A1TUF2</accession>
<evidence type="ECO:0000255" key="1">
    <source>
        <dbReference type="HAMAP-Rule" id="MF_01380"/>
    </source>
</evidence>
<feature type="chain" id="PRO_0000311435" description="Putative iron-sulfur cluster insertion protein ErpA">
    <location>
        <begin position="1"/>
        <end position="121"/>
    </location>
</feature>
<feature type="binding site" evidence="1">
    <location>
        <position position="49"/>
    </location>
    <ligand>
        <name>iron-sulfur cluster</name>
        <dbReference type="ChEBI" id="CHEBI:30408"/>
    </ligand>
</feature>
<feature type="binding site" evidence="1">
    <location>
        <position position="113"/>
    </location>
    <ligand>
        <name>iron-sulfur cluster</name>
        <dbReference type="ChEBI" id="CHEBI:30408"/>
    </ligand>
</feature>
<feature type="binding site" evidence="1">
    <location>
        <position position="115"/>
    </location>
    <ligand>
        <name>iron-sulfur cluster</name>
        <dbReference type="ChEBI" id="CHEBI:30408"/>
    </ligand>
</feature>
<protein>
    <recommendedName>
        <fullName evidence="1">Putative iron-sulfur cluster insertion protein ErpA</fullName>
    </recommendedName>
</protein>
<gene>
    <name evidence="1" type="primary">erpA</name>
    <name type="ordered locus">Aave_4049</name>
</gene>
<dbReference type="EMBL" id="CP000512">
    <property type="protein sequence ID" value="ABM34590.1"/>
    <property type="molecule type" value="Genomic_DNA"/>
</dbReference>
<dbReference type="RefSeq" id="WP_011797076.1">
    <property type="nucleotide sequence ID" value="NC_008752.1"/>
</dbReference>
<dbReference type="SMR" id="A1TUF2"/>
<dbReference type="STRING" id="397945.Aave_4049"/>
<dbReference type="GeneID" id="79789066"/>
<dbReference type="KEGG" id="aav:Aave_4049"/>
<dbReference type="eggNOG" id="COG0316">
    <property type="taxonomic scope" value="Bacteria"/>
</dbReference>
<dbReference type="HOGENOM" id="CLU_069054_5_3_4"/>
<dbReference type="OrthoDB" id="9801228at2"/>
<dbReference type="Proteomes" id="UP000002596">
    <property type="component" value="Chromosome"/>
</dbReference>
<dbReference type="GO" id="GO:0051537">
    <property type="term" value="F:2 iron, 2 sulfur cluster binding"/>
    <property type="evidence" value="ECO:0007669"/>
    <property type="project" value="TreeGrafter"/>
</dbReference>
<dbReference type="GO" id="GO:0051539">
    <property type="term" value="F:4 iron, 4 sulfur cluster binding"/>
    <property type="evidence" value="ECO:0007669"/>
    <property type="project" value="TreeGrafter"/>
</dbReference>
<dbReference type="GO" id="GO:0005506">
    <property type="term" value="F:iron ion binding"/>
    <property type="evidence" value="ECO:0007669"/>
    <property type="project" value="UniProtKB-UniRule"/>
</dbReference>
<dbReference type="GO" id="GO:0016226">
    <property type="term" value="P:iron-sulfur cluster assembly"/>
    <property type="evidence" value="ECO:0007669"/>
    <property type="project" value="UniProtKB-UniRule"/>
</dbReference>
<dbReference type="FunFam" id="2.60.300.12:FF:000002">
    <property type="entry name" value="Iron-sulfur cluster insertion protein ErpA"/>
    <property type="match status" value="1"/>
</dbReference>
<dbReference type="Gene3D" id="2.60.300.12">
    <property type="entry name" value="HesB-like domain"/>
    <property type="match status" value="1"/>
</dbReference>
<dbReference type="HAMAP" id="MF_01380">
    <property type="entry name" value="Fe_S_insert_ErpA"/>
    <property type="match status" value="1"/>
</dbReference>
<dbReference type="InterPro" id="IPR000361">
    <property type="entry name" value="FeS_biogenesis"/>
</dbReference>
<dbReference type="InterPro" id="IPR016092">
    <property type="entry name" value="FeS_cluster_insertion"/>
</dbReference>
<dbReference type="InterPro" id="IPR017870">
    <property type="entry name" value="FeS_cluster_insertion_CS"/>
</dbReference>
<dbReference type="InterPro" id="IPR023063">
    <property type="entry name" value="FeS_cluster_insertion_RrpA"/>
</dbReference>
<dbReference type="InterPro" id="IPR035903">
    <property type="entry name" value="HesB-like_dom_sf"/>
</dbReference>
<dbReference type="NCBIfam" id="TIGR00049">
    <property type="entry name" value="iron-sulfur cluster assembly accessory protein"/>
    <property type="match status" value="1"/>
</dbReference>
<dbReference type="NCBIfam" id="NF010147">
    <property type="entry name" value="PRK13623.1"/>
    <property type="match status" value="1"/>
</dbReference>
<dbReference type="PANTHER" id="PTHR43011">
    <property type="entry name" value="IRON-SULFUR CLUSTER ASSEMBLY 2 HOMOLOG, MITOCHONDRIAL"/>
    <property type="match status" value="1"/>
</dbReference>
<dbReference type="PANTHER" id="PTHR43011:SF1">
    <property type="entry name" value="IRON-SULFUR CLUSTER ASSEMBLY 2 HOMOLOG, MITOCHONDRIAL"/>
    <property type="match status" value="1"/>
</dbReference>
<dbReference type="Pfam" id="PF01521">
    <property type="entry name" value="Fe-S_biosyn"/>
    <property type="match status" value="1"/>
</dbReference>
<dbReference type="SUPFAM" id="SSF89360">
    <property type="entry name" value="HesB-like domain"/>
    <property type="match status" value="1"/>
</dbReference>
<dbReference type="PROSITE" id="PS01152">
    <property type="entry name" value="HESB"/>
    <property type="match status" value="1"/>
</dbReference>
<sequence length="121" mass="12907">MSAVAENIQTEMPAPIVFTDSAAAKVADLIAEEGNPDLKLRVFVQGGGCSGFQYGFTFDEITNEDDTTMTKNGVSLLIDAMSYQYLVGAEIDYKEDLQGAQFVIKNPNATTTCGCGSSFSV</sequence>
<reference key="1">
    <citation type="submission" date="2006-12" db="EMBL/GenBank/DDBJ databases">
        <title>Complete sequence of Acidovorax avenae subsp. citrulli AAC00-1.</title>
        <authorList>
            <person name="Copeland A."/>
            <person name="Lucas S."/>
            <person name="Lapidus A."/>
            <person name="Barry K."/>
            <person name="Detter J.C."/>
            <person name="Glavina del Rio T."/>
            <person name="Dalin E."/>
            <person name="Tice H."/>
            <person name="Pitluck S."/>
            <person name="Kiss H."/>
            <person name="Brettin T."/>
            <person name="Bruce D."/>
            <person name="Han C."/>
            <person name="Tapia R."/>
            <person name="Gilna P."/>
            <person name="Schmutz J."/>
            <person name="Larimer F."/>
            <person name="Land M."/>
            <person name="Hauser L."/>
            <person name="Kyrpides N."/>
            <person name="Kim E."/>
            <person name="Stahl D."/>
            <person name="Richardson P."/>
        </authorList>
    </citation>
    <scope>NUCLEOTIDE SEQUENCE [LARGE SCALE GENOMIC DNA]</scope>
    <source>
        <strain>AAC00-1</strain>
    </source>
</reference>
<proteinExistence type="inferred from homology"/>